<name>UBIE_RHIEC</name>
<feature type="chain" id="PRO_1000088290" description="Ubiquinone/menaquinone biosynthesis C-methyltransferase UbiE">
    <location>
        <begin position="1"/>
        <end position="258"/>
    </location>
</feature>
<feature type="region of interest" description="Disordered" evidence="2">
    <location>
        <begin position="1"/>
        <end position="20"/>
    </location>
</feature>
<feature type="binding site" evidence="1">
    <location>
        <position position="81"/>
    </location>
    <ligand>
        <name>S-adenosyl-L-methionine</name>
        <dbReference type="ChEBI" id="CHEBI:59789"/>
    </ligand>
</feature>
<feature type="binding site" evidence="1">
    <location>
        <position position="102"/>
    </location>
    <ligand>
        <name>S-adenosyl-L-methionine</name>
        <dbReference type="ChEBI" id="CHEBI:59789"/>
    </ligand>
</feature>
<feature type="binding site" evidence="1">
    <location>
        <begin position="130"/>
        <end position="131"/>
    </location>
    <ligand>
        <name>S-adenosyl-L-methionine</name>
        <dbReference type="ChEBI" id="CHEBI:59789"/>
    </ligand>
</feature>
<accession>Q2KDB0</accession>
<organism>
    <name type="scientific">Rhizobium etli (strain ATCC 51251 / DSM 11541 / JCM 21823 / NBRC 15573 / CFN 42)</name>
    <dbReference type="NCBI Taxonomy" id="347834"/>
    <lineage>
        <taxon>Bacteria</taxon>
        <taxon>Pseudomonadati</taxon>
        <taxon>Pseudomonadota</taxon>
        <taxon>Alphaproteobacteria</taxon>
        <taxon>Hyphomicrobiales</taxon>
        <taxon>Rhizobiaceae</taxon>
        <taxon>Rhizobium/Agrobacterium group</taxon>
        <taxon>Rhizobium</taxon>
    </lineage>
</organism>
<proteinExistence type="inferred from homology"/>
<reference key="1">
    <citation type="journal article" date="2006" name="Proc. Natl. Acad. Sci. U.S.A.">
        <title>The partitioned Rhizobium etli genome: genetic and metabolic redundancy in seven interacting replicons.</title>
        <authorList>
            <person name="Gonzalez V."/>
            <person name="Santamaria R.I."/>
            <person name="Bustos P."/>
            <person name="Hernandez-Gonzalez I."/>
            <person name="Medrano-Soto A."/>
            <person name="Moreno-Hagelsieb G."/>
            <person name="Janga S.C."/>
            <person name="Ramirez M.A."/>
            <person name="Jimenez-Jacinto V."/>
            <person name="Collado-Vides J."/>
            <person name="Davila G."/>
        </authorList>
    </citation>
    <scope>NUCLEOTIDE SEQUENCE [LARGE SCALE GENOMIC DNA]</scope>
    <source>
        <strain>ATCC 51251 / DSM 11541 / JCM 21823 / NBRC 15573 / CFN 42</strain>
    </source>
</reference>
<protein>
    <recommendedName>
        <fullName evidence="1">Ubiquinone/menaquinone biosynthesis C-methyltransferase UbiE</fullName>
        <ecNumber evidence="1">2.1.1.163</ecNumber>
        <ecNumber evidence="1">2.1.1.201</ecNumber>
    </recommendedName>
    <alternativeName>
        <fullName evidence="1">2-methoxy-6-polyprenyl-1,4-benzoquinol methylase</fullName>
    </alternativeName>
    <alternativeName>
        <fullName evidence="1">Demethylmenaquinone methyltransferase</fullName>
    </alternativeName>
</protein>
<keyword id="KW-0474">Menaquinone biosynthesis</keyword>
<keyword id="KW-0489">Methyltransferase</keyword>
<keyword id="KW-1185">Reference proteome</keyword>
<keyword id="KW-0949">S-adenosyl-L-methionine</keyword>
<keyword id="KW-0808">Transferase</keyword>
<keyword id="KW-0831">Ubiquinone biosynthesis</keyword>
<dbReference type="EC" id="2.1.1.163" evidence="1"/>
<dbReference type="EC" id="2.1.1.201" evidence="1"/>
<dbReference type="EMBL" id="CP000133">
    <property type="protein sequence ID" value="ABC89176.1"/>
    <property type="molecule type" value="Genomic_DNA"/>
</dbReference>
<dbReference type="RefSeq" id="WP_011423738.1">
    <property type="nucleotide sequence ID" value="NC_007761.1"/>
</dbReference>
<dbReference type="SMR" id="Q2KDB0"/>
<dbReference type="KEGG" id="ret:RHE_CH00354"/>
<dbReference type="eggNOG" id="COG2226">
    <property type="taxonomic scope" value="Bacteria"/>
</dbReference>
<dbReference type="HOGENOM" id="CLU_037990_0_0_5"/>
<dbReference type="OrthoDB" id="9808140at2"/>
<dbReference type="UniPathway" id="UPA00079">
    <property type="reaction ID" value="UER00169"/>
</dbReference>
<dbReference type="UniPathway" id="UPA00232"/>
<dbReference type="Proteomes" id="UP000001936">
    <property type="component" value="Chromosome"/>
</dbReference>
<dbReference type="GO" id="GO:0008425">
    <property type="term" value="F:2-methoxy-6-polyprenyl-1,4-benzoquinol methyltransferase activity"/>
    <property type="evidence" value="ECO:0007669"/>
    <property type="project" value="UniProtKB-UniRule"/>
</dbReference>
<dbReference type="GO" id="GO:0043770">
    <property type="term" value="F:demethylmenaquinone methyltransferase activity"/>
    <property type="evidence" value="ECO:0007669"/>
    <property type="project" value="UniProtKB-UniRule"/>
</dbReference>
<dbReference type="GO" id="GO:0009060">
    <property type="term" value="P:aerobic respiration"/>
    <property type="evidence" value="ECO:0007669"/>
    <property type="project" value="UniProtKB-UniRule"/>
</dbReference>
<dbReference type="GO" id="GO:0009234">
    <property type="term" value="P:menaquinone biosynthetic process"/>
    <property type="evidence" value="ECO:0007669"/>
    <property type="project" value="UniProtKB-UniRule"/>
</dbReference>
<dbReference type="GO" id="GO:0032259">
    <property type="term" value="P:methylation"/>
    <property type="evidence" value="ECO:0007669"/>
    <property type="project" value="UniProtKB-KW"/>
</dbReference>
<dbReference type="CDD" id="cd02440">
    <property type="entry name" value="AdoMet_MTases"/>
    <property type="match status" value="1"/>
</dbReference>
<dbReference type="FunFam" id="3.40.50.150:FF:000064">
    <property type="entry name" value="2-methoxy-6-polyprenyl-1,4-benzoquinol methylase, mitochondrial"/>
    <property type="match status" value="1"/>
</dbReference>
<dbReference type="Gene3D" id="3.40.50.150">
    <property type="entry name" value="Vaccinia Virus protein VP39"/>
    <property type="match status" value="1"/>
</dbReference>
<dbReference type="HAMAP" id="MF_01813">
    <property type="entry name" value="MenG_UbiE_methyltr"/>
    <property type="match status" value="1"/>
</dbReference>
<dbReference type="InterPro" id="IPR029063">
    <property type="entry name" value="SAM-dependent_MTases_sf"/>
</dbReference>
<dbReference type="InterPro" id="IPR004033">
    <property type="entry name" value="UbiE/COQ5_MeTrFase"/>
</dbReference>
<dbReference type="InterPro" id="IPR023576">
    <property type="entry name" value="UbiE/COQ5_MeTrFase_CS"/>
</dbReference>
<dbReference type="NCBIfam" id="TIGR01934">
    <property type="entry name" value="MenG_MenH_UbiE"/>
    <property type="match status" value="1"/>
</dbReference>
<dbReference type="NCBIfam" id="NF001242">
    <property type="entry name" value="PRK00216.1-3"/>
    <property type="match status" value="1"/>
</dbReference>
<dbReference type="NCBIfam" id="NF001244">
    <property type="entry name" value="PRK00216.1-5"/>
    <property type="match status" value="1"/>
</dbReference>
<dbReference type="PANTHER" id="PTHR43591:SF24">
    <property type="entry name" value="2-METHOXY-6-POLYPRENYL-1,4-BENZOQUINOL METHYLASE, MITOCHONDRIAL"/>
    <property type="match status" value="1"/>
</dbReference>
<dbReference type="PANTHER" id="PTHR43591">
    <property type="entry name" value="METHYLTRANSFERASE"/>
    <property type="match status" value="1"/>
</dbReference>
<dbReference type="Pfam" id="PF01209">
    <property type="entry name" value="Ubie_methyltran"/>
    <property type="match status" value="1"/>
</dbReference>
<dbReference type="SUPFAM" id="SSF53335">
    <property type="entry name" value="S-adenosyl-L-methionine-dependent methyltransferases"/>
    <property type="match status" value="1"/>
</dbReference>
<dbReference type="PROSITE" id="PS51608">
    <property type="entry name" value="SAM_MT_UBIE"/>
    <property type="match status" value="1"/>
</dbReference>
<dbReference type="PROSITE" id="PS01183">
    <property type="entry name" value="UBIE_1"/>
    <property type="match status" value="1"/>
</dbReference>
<dbReference type="PROSITE" id="PS01184">
    <property type="entry name" value="UBIE_2"/>
    <property type="match status" value="1"/>
</dbReference>
<sequence length="258" mass="28432">MSESRTSADGGMETSYGFREVPGGEKQGLVNQVFHKVAKRYDIMNDVMSMGMHRAWKDAMIAALNPRKEPGYKVLDVAGGTGDIAFRIVEASGRQAHATVLDINGSMLGVGAERAEKKKLSGNLTFVEANAEELPFEAASFDAYTIAFGIRNVPRIDKALSEAYRVLKRGGRLLVLEFSEVDMPLLDKIYDAWSFNAIPQFGKAITGDAEPYQYLVESIRKFPNQENFAAMIRQAGFSRVTYTNYTGGIAALHSGWKL</sequence>
<evidence type="ECO:0000255" key="1">
    <source>
        <dbReference type="HAMAP-Rule" id="MF_01813"/>
    </source>
</evidence>
<evidence type="ECO:0000256" key="2">
    <source>
        <dbReference type="SAM" id="MobiDB-lite"/>
    </source>
</evidence>
<gene>
    <name evidence="1" type="primary">ubiE</name>
    <name type="ordered locus">RHE_CH00354</name>
</gene>
<comment type="function">
    <text evidence="1">Methyltransferase required for the conversion of demethylmenaquinol (DMKH2) to menaquinol (MKH2) and the conversion of 2-polyprenyl-6-methoxy-1,4-benzoquinol (DDMQH2) to 2-polyprenyl-3-methyl-6-methoxy-1,4-benzoquinol (DMQH2).</text>
</comment>
<comment type="catalytic activity">
    <reaction evidence="1">
        <text>a 2-demethylmenaquinol + S-adenosyl-L-methionine = a menaquinol + S-adenosyl-L-homocysteine + H(+)</text>
        <dbReference type="Rhea" id="RHEA:42640"/>
        <dbReference type="Rhea" id="RHEA-COMP:9539"/>
        <dbReference type="Rhea" id="RHEA-COMP:9563"/>
        <dbReference type="ChEBI" id="CHEBI:15378"/>
        <dbReference type="ChEBI" id="CHEBI:18151"/>
        <dbReference type="ChEBI" id="CHEBI:55437"/>
        <dbReference type="ChEBI" id="CHEBI:57856"/>
        <dbReference type="ChEBI" id="CHEBI:59789"/>
        <dbReference type="EC" id="2.1.1.163"/>
    </reaction>
</comment>
<comment type="catalytic activity">
    <reaction evidence="1">
        <text>a 2-methoxy-6-(all-trans-polyprenyl)benzene-1,4-diol + S-adenosyl-L-methionine = a 5-methoxy-2-methyl-3-(all-trans-polyprenyl)benzene-1,4-diol + S-adenosyl-L-homocysteine + H(+)</text>
        <dbReference type="Rhea" id="RHEA:28286"/>
        <dbReference type="Rhea" id="RHEA-COMP:10858"/>
        <dbReference type="Rhea" id="RHEA-COMP:10859"/>
        <dbReference type="ChEBI" id="CHEBI:15378"/>
        <dbReference type="ChEBI" id="CHEBI:57856"/>
        <dbReference type="ChEBI" id="CHEBI:59789"/>
        <dbReference type="ChEBI" id="CHEBI:84166"/>
        <dbReference type="ChEBI" id="CHEBI:84167"/>
        <dbReference type="EC" id="2.1.1.201"/>
    </reaction>
</comment>
<comment type="pathway">
    <text evidence="1">Quinol/quinone metabolism; menaquinone biosynthesis; menaquinol from 1,4-dihydroxy-2-naphthoate: step 2/2.</text>
</comment>
<comment type="pathway">
    <text evidence="1">Cofactor biosynthesis; ubiquinone biosynthesis.</text>
</comment>
<comment type="similarity">
    <text evidence="1">Belongs to the class I-like SAM-binding methyltransferase superfamily. MenG/UbiE family.</text>
</comment>